<name>RPOC1_HORVU</name>
<gene>
    <name evidence="1" type="primary">rpoC1</name>
</gene>
<geneLocation type="chloroplast"/>
<evidence type="ECO:0000255" key="1">
    <source>
        <dbReference type="HAMAP-Rule" id="MF_01323"/>
    </source>
</evidence>
<proteinExistence type="inferred from homology"/>
<accession>A1E9I2</accession>
<sequence>MIDQYKHQQLQIGLVSPQQIKAWANKNLPNGEAVGEVTRPSTFHYKTDKPEKDGLFCERIFGPIKSGICGCGNSRASGAENEDERFCQKCGVEFVDSRIRRYQMGYIKLACPVTHVWYLKGLPSYIANLLDKPLKKLEGLVYGDFSFARPSTKKPTFLRLRGLFEEEIASCNHSISPFFSTPGFATFRNREIATGAGAIREQLADLDLRIIIENSLVEWKELEDEGYSGDEWEDRKRRIRKVFLIRRMQLAKHFIQTNVEPEWMVLCLLPVLPPELRPIVYRSGDKVVTSDINELYKRVIRRNNNLAYLLKRSELAPADLVMCQEKLVQEAVDTLLDSGSRGQPTRDGHNKVYKSLSDVIEGKEGRFRETLLGKRVDYSGRSVIVVGPSLSLHQCGLPLEIAIKLFQLFVIRDLITKRATSNVRIAKRKIWEKEPIVWEILQEVMRGHPVLLNRAPTLHRLGIQAFQPTLVEGRTISLHPLVCKGFNADFDGDQMAVHLPLSLEAQAEARLLMFSHMNLLSPAIGDPICVPTQDMLIGLYVLTIGKRRGICANRYNSFRNYPNLKVNYNNNNSKYRKDKEPHFSSSYDALGAYRQKLISLDSPLWLRWNLDQRVIGSREVPIEIQYESLGTYHEIYAHYLIMGNRKKEIRSIYIRTTLGHISFYREIEEAVQGFSQAYSYTT</sequence>
<keyword id="KW-0150">Chloroplast</keyword>
<keyword id="KW-0240">DNA-directed RNA polymerase</keyword>
<keyword id="KW-0460">Magnesium</keyword>
<keyword id="KW-0479">Metal-binding</keyword>
<keyword id="KW-0548">Nucleotidyltransferase</keyword>
<keyword id="KW-0934">Plastid</keyword>
<keyword id="KW-0804">Transcription</keyword>
<keyword id="KW-0808">Transferase</keyword>
<keyword id="KW-0862">Zinc</keyword>
<organism>
    <name type="scientific">Hordeum vulgare</name>
    <name type="common">Barley</name>
    <dbReference type="NCBI Taxonomy" id="4513"/>
    <lineage>
        <taxon>Eukaryota</taxon>
        <taxon>Viridiplantae</taxon>
        <taxon>Streptophyta</taxon>
        <taxon>Embryophyta</taxon>
        <taxon>Tracheophyta</taxon>
        <taxon>Spermatophyta</taxon>
        <taxon>Magnoliopsida</taxon>
        <taxon>Liliopsida</taxon>
        <taxon>Poales</taxon>
        <taxon>Poaceae</taxon>
        <taxon>BOP clade</taxon>
        <taxon>Pooideae</taxon>
        <taxon>Triticodae</taxon>
        <taxon>Triticeae</taxon>
        <taxon>Hordeinae</taxon>
        <taxon>Hordeum</taxon>
    </lineage>
</organism>
<protein>
    <recommendedName>
        <fullName evidence="1">DNA-directed RNA polymerase subunit beta'</fullName>
        <ecNumber evidence="1">2.7.7.6</ecNumber>
    </recommendedName>
    <alternativeName>
        <fullName evidence="1">PEP</fullName>
    </alternativeName>
    <alternativeName>
        <fullName evidence="1">Plastid-encoded RNA polymerase subunit beta'</fullName>
        <shortName evidence="1">RNA polymerase subunit beta'</shortName>
    </alternativeName>
</protein>
<dbReference type="EC" id="2.7.7.6" evidence="1"/>
<dbReference type="EMBL" id="EF115541">
    <property type="protein sequence ID" value="ABK79404.1"/>
    <property type="molecule type" value="Genomic_DNA"/>
</dbReference>
<dbReference type="RefSeq" id="YP_010144416.1">
    <property type="nucleotide sequence ID" value="NC_056985.1"/>
</dbReference>
<dbReference type="RefSeq" id="YP_874644.1">
    <property type="nucleotide sequence ID" value="NC_008590.1"/>
</dbReference>
<dbReference type="SMR" id="A1E9I2"/>
<dbReference type="GeneID" id="4525121"/>
<dbReference type="GeneID" id="67140678"/>
<dbReference type="OMA" id="DAKCMIQ"/>
<dbReference type="GO" id="GO:0009507">
    <property type="term" value="C:chloroplast"/>
    <property type="evidence" value="ECO:0007669"/>
    <property type="project" value="UniProtKB-SubCell"/>
</dbReference>
<dbReference type="GO" id="GO:0000428">
    <property type="term" value="C:DNA-directed RNA polymerase complex"/>
    <property type="evidence" value="ECO:0007669"/>
    <property type="project" value="UniProtKB-KW"/>
</dbReference>
<dbReference type="GO" id="GO:0005739">
    <property type="term" value="C:mitochondrion"/>
    <property type="evidence" value="ECO:0007669"/>
    <property type="project" value="GOC"/>
</dbReference>
<dbReference type="GO" id="GO:0003677">
    <property type="term" value="F:DNA binding"/>
    <property type="evidence" value="ECO:0007669"/>
    <property type="project" value="UniProtKB-UniRule"/>
</dbReference>
<dbReference type="GO" id="GO:0003899">
    <property type="term" value="F:DNA-directed RNA polymerase activity"/>
    <property type="evidence" value="ECO:0007669"/>
    <property type="project" value="UniProtKB-UniRule"/>
</dbReference>
<dbReference type="GO" id="GO:0000287">
    <property type="term" value="F:magnesium ion binding"/>
    <property type="evidence" value="ECO:0007669"/>
    <property type="project" value="UniProtKB-UniRule"/>
</dbReference>
<dbReference type="GO" id="GO:0008270">
    <property type="term" value="F:zinc ion binding"/>
    <property type="evidence" value="ECO:0007669"/>
    <property type="project" value="UniProtKB-UniRule"/>
</dbReference>
<dbReference type="GO" id="GO:0006351">
    <property type="term" value="P:DNA-templated transcription"/>
    <property type="evidence" value="ECO:0007669"/>
    <property type="project" value="UniProtKB-UniRule"/>
</dbReference>
<dbReference type="Gene3D" id="1.10.40.90">
    <property type="match status" value="1"/>
</dbReference>
<dbReference type="Gene3D" id="2.40.40.20">
    <property type="match status" value="1"/>
</dbReference>
<dbReference type="Gene3D" id="4.10.860.120">
    <property type="entry name" value="RNA polymerase II, clamp domain"/>
    <property type="match status" value="1"/>
</dbReference>
<dbReference type="Gene3D" id="1.10.274.100">
    <property type="entry name" value="RNA polymerase Rpb1, domain 3"/>
    <property type="match status" value="1"/>
</dbReference>
<dbReference type="HAMAP" id="MF_01323">
    <property type="entry name" value="RNApol_bact_RpoC1"/>
    <property type="match status" value="1"/>
</dbReference>
<dbReference type="InterPro" id="IPR045867">
    <property type="entry name" value="DNA-dir_RpoC_beta_prime"/>
</dbReference>
<dbReference type="InterPro" id="IPR000722">
    <property type="entry name" value="RNA_pol_asu"/>
</dbReference>
<dbReference type="InterPro" id="IPR006592">
    <property type="entry name" value="RNA_pol_N"/>
</dbReference>
<dbReference type="InterPro" id="IPR007080">
    <property type="entry name" value="RNA_pol_Rpb1_1"/>
</dbReference>
<dbReference type="InterPro" id="IPR042102">
    <property type="entry name" value="RNA_pol_Rpb1_3_sf"/>
</dbReference>
<dbReference type="InterPro" id="IPR044893">
    <property type="entry name" value="RNA_pol_Rpb1_clamp_domain"/>
</dbReference>
<dbReference type="InterPro" id="IPR034678">
    <property type="entry name" value="RNApol_RpoC1"/>
</dbReference>
<dbReference type="PANTHER" id="PTHR19376">
    <property type="entry name" value="DNA-DIRECTED RNA POLYMERASE"/>
    <property type="match status" value="1"/>
</dbReference>
<dbReference type="PANTHER" id="PTHR19376:SF54">
    <property type="entry name" value="DNA-DIRECTED RNA POLYMERASE SUBUNIT BETA"/>
    <property type="match status" value="1"/>
</dbReference>
<dbReference type="Pfam" id="PF04997">
    <property type="entry name" value="RNA_pol_Rpb1_1"/>
    <property type="match status" value="1"/>
</dbReference>
<dbReference type="Pfam" id="PF00623">
    <property type="entry name" value="RNA_pol_Rpb1_2"/>
    <property type="match status" value="2"/>
</dbReference>
<dbReference type="SMART" id="SM00663">
    <property type="entry name" value="RPOLA_N"/>
    <property type="match status" value="1"/>
</dbReference>
<dbReference type="SUPFAM" id="SSF64484">
    <property type="entry name" value="beta and beta-prime subunits of DNA dependent RNA-polymerase"/>
    <property type="match status" value="1"/>
</dbReference>
<reference key="1">
    <citation type="journal article" date="2007" name="Theor. Appl. Genet.">
        <title>Complete chloroplast genome sequences of Hordeum vulgare, Sorghum bicolor and Agrostis stolonifera, and comparative analyses with other grass genomes.</title>
        <authorList>
            <person name="Saski C."/>
            <person name="Lee S.-B."/>
            <person name="Fjellheim S."/>
            <person name="Guda C."/>
            <person name="Jansen R.K."/>
            <person name="Luo H."/>
            <person name="Tomkins J."/>
            <person name="Rognli O.A."/>
            <person name="Daniell H."/>
            <person name="Clarke J.L."/>
        </authorList>
    </citation>
    <scope>NUCLEOTIDE SEQUENCE [LARGE SCALE GENOMIC DNA]</scope>
    <source>
        <strain>cv. Morex</strain>
    </source>
</reference>
<comment type="function">
    <text evidence="1">DNA-dependent RNA polymerase catalyzes the transcription of DNA into RNA using the four ribonucleoside triphosphates as substrates.</text>
</comment>
<comment type="catalytic activity">
    <reaction evidence="1">
        <text>RNA(n) + a ribonucleoside 5'-triphosphate = RNA(n+1) + diphosphate</text>
        <dbReference type="Rhea" id="RHEA:21248"/>
        <dbReference type="Rhea" id="RHEA-COMP:14527"/>
        <dbReference type="Rhea" id="RHEA-COMP:17342"/>
        <dbReference type="ChEBI" id="CHEBI:33019"/>
        <dbReference type="ChEBI" id="CHEBI:61557"/>
        <dbReference type="ChEBI" id="CHEBI:140395"/>
        <dbReference type="EC" id="2.7.7.6"/>
    </reaction>
</comment>
<comment type="cofactor">
    <cofactor evidence="1">
        <name>Mg(2+)</name>
        <dbReference type="ChEBI" id="CHEBI:18420"/>
    </cofactor>
    <text evidence="1">Binds 1 Mg(2+) ion per subunit.</text>
</comment>
<comment type="cofactor">
    <cofactor evidence="1">
        <name>Zn(2+)</name>
        <dbReference type="ChEBI" id="CHEBI:29105"/>
    </cofactor>
    <text evidence="1">Binds 1 Zn(2+) ion per subunit.</text>
</comment>
<comment type="subunit">
    <text evidence="1">In plastids the minimal PEP RNA polymerase catalytic core is composed of four subunits: alpha, beta, beta', and beta''. When a (nuclear-encoded) sigma factor is associated with the core the holoenzyme is formed, which can initiate transcription.</text>
</comment>
<comment type="subcellular location">
    <subcellularLocation>
        <location evidence="1">Plastid</location>
        <location evidence="1">Chloroplast</location>
    </subcellularLocation>
</comment>
<comment type="similarity">
    <text evidence="1">Belongs to the RNA polymerase beta' chain family. RpoC1 subfamily.</text>
</comment>
<feature type="chain" id="PRO_0000353492" description="DNA-directed RNA polymerase subunit beta'">
    <location>
        <begin position="1"/>
        <end position="682"/>
    </location>
</feature>
<feature type="binding site" evidence="1">
    <location>
        <position position="69"/>
    </location>
    <ligand>
        <name>Zn(2+)</name>
        <dbReference type="ChEBI" id="CHEBI:29105"/>
    </ligand>
</feature>
<feature type="binding site" evidence="1">
    <location>
        <position position="71"/>
    </location>
    <ligand>
        <name>Zn(2+)</name>
        <dbReference type="ChEBI" id="CHEBI:29105"/>
    </ligand>
</feature>
<feature type="binding site" evidence="1">
    <location>
        <position position="87"/>
    </location>
    <ligand>
        <name>Zn(2+)</name>
        <dbReference type="ChEBI" id="CHEBI:29105"/>
    </ligand>
</feature>
<feature type="binding site" evidence="1">
    <location>
        <position position="90"/>
    </location>
    <ligand>
        <name>Zn(2+)</name>
        <dbReference type="ChEBI" id="CHEBI:29105"/>
    </ligand>
</feature>
<feature type="binding site" evidence="1">
    <location>
        <position position="489"/>
    </location>
    <ligand>
        <name>Mg(2+)</name>
        <dbReference type="ChEBI" id="CHEBI:18420"/>
    </ligand>
</feature>
<feature type="binding site" evidence="1">
    <location>
        <position position="491"/>
    </location>
    <ligand>
        <name>Mg(2+)</name>
        <dbReference type="ChEBI" id="CHEBI:18420"/>
    </ligand>
</feature>
<feature type="binding site" evidence="1">
    <location>
        <position position="493"/>
    </location>
    <ligand>
        <name>Mg(2+)</name>
        <dbReference type="ChEBI" id="CHEBI:18420"/>
    </ligand>
</feature>